<feature type="initiator methionine" description="Removed" evidence="2">
    <location>
        <position position="1"/>
    </location>
</feature>
<feature type="chain" id="PRO_0000318080" description="Meiotic nuclear division protein 1 homolog">
    <location>
        <begin position="2"/>
        <end position="205"/>
    </location>
</feature>
<feature type="coiled-coil region" evidence="3">
    <location>
        <begin position="83"/>
        <end position="173"/>
    </location>
</feature>
<feature type="modified residue" description="N-acetylserine" evidence="2">
    <location>
        <position position="2"/>
    </location>
</feature>
<sequence>MSKKKGLSAEEKRTRMMEIFYETKDVFQLKDMEKIAPKEKGITTMSVKEVLQSLVDDGMVDCERIGTSNYYWAFPSKALHARKRKLEVLDSQLSEGNQKYANLQKSIEKAKVGRHETEERTMLAKELSSLRDQREQLKAEVEKYRECDPQVVEEIRQANQVAKEAANRWTDNIFAIKSWAKRKFGFEENKIDKNFGIPEDFDYID</sequence>
<proteinExistence type="evidence at transcript level"/>
<comment type="function">
    <text evidence="1">Required for proper homologous chromosome pairing and efficient cross-over and intragenic recombination during meiosis. Stimulates both DMC1- and RAD51-mediated homologous strand assimilation, which is required for the resolution of meiotic double-strand breaks (By similarity).</text>
</comment>
<comment type="subunit">
    <text evidence="1 2">Heterodimer with PSMC3IP/HOP2. MND1-PSMC3IP interacts with DMC1 and RAD51 and binds preferentially to dsDNA (By similarity).</text>
</comment>
<comment type="subcellular location">
    <subcellularLocation>
        <location evidence="4">Nucleus</location>
    </subcellularLocation>
</comment>
<comment type="similarity">
    <text evidence="4">Belongs to the MND1 family.</text>
</comment>
<keyword id="KW-0007">Acetylation</keyword>
<keyword id="KW-0175">Coiled coil</keyword>
<keyword id="KW-0233">DNA recombination</keyword>
<keyword id="KW-0238">DNA-binding</keyword>
<keyword id="KW-0469">Meiosis</keyword>
<keyword id="KW-0539">Nucleus</keyword>
<keyword id="KW-1185">Reference proteome</keyword>
<gene>
    <name evidence="2" type="primary">MND1</name>
</gene>
<evidence type="ECO:0000250" key="1">
    <source>
        <dbReference type="UniProtKB" id="Q8K396"/>
    </source>
</evidence>
<evidence type="ECO:0000250" key="2">
    <source>
        <dbReference type="UniProtKB" id="Q9BWT6"/>
    </source>
</evidence>
<evidence type="ECO:0000255" key="3"/>
<evidence type="ECO:0000305" key="4"/>
<evidence type="ECO:0000312" key="5">
    <source>
        <dbReference type="EMBL" id="AAI09807.1"/>
    </source>
</evidence>
<name>MND1_BOVIN</name>
<reference evidence="5" key="1">
    <citation type="submission" date="2005-11" db="EMBL/GenBank/DDBJ databases">
        <authorList>
            <consortium name="NIH - Mammalian Gene Collection (MGC) project"/>
        </authorList>
    </citation>
    <scope>NUCLEOTIDE SEQUENCE [LARGE SCALE MRNA]</scope>
    <source>
        <strain evidence="5">Crossbred X Angus</strain>
        <tissue evidence="5">Liver</tissue>
    </source>
</reference>
<organism>
    <name type="scientific">Bos taurus</name>
    <name type="common">Bovine</name>
    <dbReference type="NCBI Taxonomy" id="9913"/>
    <lineage>
        <taxon>Eukaryota</taxon>
        <taxon>Metazoa</taxon>
        <taxon>Chordata</taxon>
        <taxon>Craniata</taxon>
        <taxon>Vertebrata</taxon>
        <taxon>Euteleostomi</taxon>
        <taxon>Mammalia</taxon>
        <taxon>Eutheria</taxon>
        <taxon>Laurasiatheria</taxon>
        <taxon>Artiodactyla</taxon>
        <taxon>Ruminantia</taxon>
        <taxon>Pecora</taxon>
        <taxon>Bovidae</taxon>
        <taxon>Bovinae</taxon>
        <taxon>Bos</taxon>
    </lineage>
</organism>
<accession>Q32L19</accession>
<protein>
    <recommendedName>
        <fullName>Meiotic nuclear division protein 1 homolog</fullName>
    </recommendedName>
</protein>
<dbReference type="EMBL" id="BC109806">
    <property type="protein sequence ID" value="AAI09807.1"/>
    <property type="molecule type" value="mRNA"/>
</dbReference>
<dbReference type="RefSeq" id="NP_001033312.1">
    <property type="nucleotide sequence ID" value="NM_001038223.2"/>
</dbReference>
<dbReference type="SMR" id="Q32L19"/>
<dbReference type="FunCoup" id="Q32L19">
    <property type="interactions" value="525"/>
</dbReference>
<dbReference type="STRING" id="9913.ENSBTAP00000000351"/>
<dbReference type="PaxDb" id="9913-ENSBTAP00000000351"/>
<dbReference type="GeneID" id="618239"/>
<dbReference type="KEGG" id="bta:618239"/>
<dbReference type="CTD" id="84057"/>
<dbReference type="eggNOG" id="KOG3433">
    <property type="taxonomic scope" value="Eukaryota"/>
</dbReference>
<dbReference type="InParanoid" id="Q32L19"/>
<dbReference type="OrthoDB" id="273345at2759"/>
<dbReference type="Proteomes" id="UP000009136">
    <property type="component" value="Unplaced"/>
</dbReference>
<dbReference type="GO" id="GO:0005634">
    <property type="term" value="C:nucleus"/>
    <property type="evidence" value="ECO:0007669"/>
    <property type="project" value="UniProtKB-SubCell"/>
</dbReference>
<dbReference type="GO" id="GO:0003690">
    <property type="term" value="F:double-stranded DNA binding"/>
    <property type="evidence" value="ECO:0007669"/>
    <property type="project" value="InterPro"/>
</dbReference>
<dbReference type="GO" id="GO:0007131">
    <property type="term" value="P:reciprocal meiotic recombination"/>
    <property type="evidence" value="ECO:0007669"/>
    <property type="project" value="InterPro"/>
</dbReference>
<dbReference type="InterPro" id="IPR040661">
    <property type="entry name" value="LZ3wCH"/>
</dbReference>
<dbReference type="InterPro" id="IPR005647">
    <property type="entry name" value="Mnd1"/>
</dbReference>
<dbReference type="InterPro" id="IPR040453">
    <property type="entry name" value="Mnd1_HTH"/>
</dbReference>
<dbReference type="InterPro" id="IPR036390">
    <property type="entry name" value="WH_DNA-bd_sf"/>
</dbReference>
<dbReference type="PANTHER" id="PTHR31398">
    <property type="entry name" value="MEIOTIC NUCLEAR DIVISION PROTEIN 1 HOMOLOG"/>
    <property type="match status" value="1"/>
</dbReference>
<dbReference type="PANTHER" id="PTHR31398:SF0">
    <property type="entry name" value="MEIOTIC NUCLEAR DIVISION PROTEIN 1 HOMOLOG"/>
    <property type="match status" value="1"/>
</dbReference>
<dbReference type="Pfam" id="PF18517">
    <property type="entry name" value="LZ3wCH"/>
    <property type="match status" value="1"/>
</dbReference>
<dbReference type="Pfam" id="PF03962">
    <property type="entry name" value="Mnd1"/>
    <property type="match status" value="1"/>
</dbReference>
<dbReference type="PIRSF" id="PIRSF026991">
    <property type="entry name" value="Mnd1"/>
    <property type="match status" value="1"/>
</dbReference>
<dbReference type="SUPFAM" id="SSF46785">
    <property type="entry name" value="Winged helix' DNA-binding domain"/>
    <property type="match status" value="1"/>
</dbReference>